<dbReference type="EMBL" id="AE017194">
    <property type="protein sequence ID" value="AAS43461.1"/>
    <property type="molecule type" value="Genomic_DNA"/>
</dbReference>
<dbReference type="SMR" id="Q72ZV7"/>
<dbReference type="KEGG" id="bca:BCE_4560"/>
<dbReference type="HOGENOM" id="CLU_033732_3_0_9"/>
<dbReference type="Proteomes" id="UP000002527">
    <property type="component" value="Chromosome"/>
</dbReference>
<dbReference type="GO" id="GO:0005829">
    <property type="term" value="C:cytosol"/>
    <property type="evidence" value="ECO:0007669"/>
    <property type="project" value="TreeGrafter"/>
</dbReference>
<dbReference type="GO" id="GO:0005525">
    <property type="term" value="F:GTP binding"/>
    <property type="evidence" value="ECO:0007669"/>
    <property type="project" value="UniProtKB-UniRule"/>
</dbReference>
<dbReference type="GO" id="GO:0046872">
    <property type="term" value="F:metal ion binding"/>
    <property type="evidence" value="ECO:0007669"/>
    <property type="project" value="UniProtKB-KW"/>
</dbReference>
<dbReference type="GO" id="GO:0000917">
    <property type="term" value="P:division septum assembly"/>
    <property type="evidence" value="ECO:0007669"/>
    <property type="project" value="UniProtKB-KW"/>
</dbReference>
<dbReference type="CDD" id="cd01876">
    <property type="entry name" value="YihA_EngB"/>
    <property type="match status" value="1"/>
</dbReference>
<dbReference type="FunFam" id="3.40.50.300:FF:000098">
    <property type="entry name" value="Probable GTP-binding protein EngB"/>
    <property type="match status" value="1"/>
</dbReference>
<dbReference type="Gene3D" id="3.40.50.300">
    <property type="entry name" value="P-loop containing nucleotide triphosphate hydrolases"/>
    <property type="match status" value="1"/>
</dbReference>
<dbReference type="HAMAP" id="MF_00321">
    <property type="entry name" value="GTPase_EngB"/>
    <property type="match status" value="1"/>
</dbReference>
<dbReference type="InterPro" id="IPR030393">
    <property type="entry name" value="G_ENGB_dom"/>
</dbReference>
<dbReference type="InterPro" id="IPR006073">
    <property type="entry name" value="GTP-bd"/>
</dbReference>
<dbReference type="InterPro" id="IPR019987">
    <property type="entry name" value="GTP-bd_ribosome_bio_YsxC"/>
</dbReference>
<dbReference type="InterPro" id="IPR027417">
    <property type="entry name" value="P-loop_NTPase"/>
</dbReference>
<dbReference type="InterPro" id="IPR005225">
    <property type="entry name" value="Small_GTP-bd"/>
</dbReference>
<dbReference type="NCBIfam" id="TIGR03598">
    <property type="entry name" value="GTPase_YsxC"/>
    <property type="match status" value="1"/>
</dbReference>
<dbReference type="NCBIfam" id="TIGR00231">
    <property type="entry name" value="small_GTP"/>
    <property type="match status" value="1"/>
</dbReference>
<dbReference type="PANTHER" id="PTHR11649:SF13">
    <property type="entry name" value="ENGB-TYPE G DOMAIN-CONTAINING PROTEIN"/>
    <property type="match status" value="1"/>
</dbReference>
<dbReference type="PANTHER" id="PTHR11649">
    <property type="entry name" value="MSS1/TRME-RELATED GTP-BINDING PROTEIN"/>
    <property type="match status" value="1"/>
</dbReference>
<dbReference type="Pfam" id="PF01926">
    <property type="entry name" value="MMR_HSR1"/>
    <property type="match status" value="1"/>
</dbReference>
<dbReference type="SUPFAM" id="SSF52540">
    <property type="entry name" value="P-loop containing nucleoside triphosphate hydrolases"/>
    <property type="match status" value="1"/>
</dbReference>
<dbReference type="PROSITE" id="PS51706">
    <property type="entry name" value="G_ENGB"/>
    <property type="match status" value="1"/>
</dbReference>
<sequence length="198" mass="22386">MKVTKADIVISAVKPEQYPDGDLPEIALAGRSNVGKSSFINKILNRKKLVRISSKPGKTQTLNFFLINEMMHFVDVPGYGYAKVSKTERAAWGKMIETYFTTREQLDAAVLVVDLRHKPTNDDVMMYDFLKHYDIPTIIIATKADKIPKGKWQKHLKVVKETLDIESGDEVVLFSSETGLGKEEAWKAIHKFTKTKNA</sequence>
<evidence type="ECO:0000255" key="1">
    <source>
        <dbReference type="HAMAP-Rule" id="MF_00321"/>
    </source>
</evidence>
<accession>Q72ZV7</accession>
<organism>
    <name type="scientific">Bacillus cereus (strain ATCC 10987 / NRS 248)</name>
    <dbReference type="NCBI Taxonomy" id="222523"/>
    <lineage>
        <taxon>Bacteria</taxon>
        <taxon>Bacillati</taxon>
        <taxon>Bacillota</taxon>
        <taxon>Bacilli</taxon>
        <taxon>Bacillales</taxon>
        <taxon>Bacillaceae</taxon>
        <taxon>Bacillus</taxon>
        <taxon>Bacillus cereus group</taxon>
    </lineage>
</organism>
<reference key="1">
    <citation type="journal article" date="2004" name="Nucleic Acids Res.">
        <title>The genome sequence of Bacillus cereus ATCC 10987 reveals metabolic adaptations and a large plasmid related to Bacillus anthracis pXO1.</title>
        <authorList>
            <person name="Rasko D.A."/>
            <person name="Ravel J."/>
            <person name="Oekstad O.A."/>
            <person name="Helgason E."/>
            <person name="Cer R.Z."/>
            <person name="Jiang L."/>
            <person name="Shores K.A."/>
            <person name="Fouts D.E."/>
            <person name="Tourasse N.J."/>
            <person name="Angiuoli S.V."/>
            <person name="Kolonay J.F."/>
            <person name="Nelson W.C."/>
            <person name="Kolstoe A.-B."/>
            <person name="Fraser C.M."/>
            <person name="Read T.D."/>
        </authorList>
    </citation>
    <scope>NUCLEOTIDE SEQUENCE [LARGE SCALE GENOMIC DNA]</scope>
    <source>
        <strain>ATCC 10987 / NRS 248</strain>
    </source>
</reference>
<protein>
    <recommendedName>
        <fullName evidence="1">Probable GTP-binding protein EngB</fullName>
    </recommendedName>
</protein>
<gene>
    <name evidence="1" type="primary">engB</name>
    <name type="ordered locus">BCE_4560</name>
</gene>
<name>ENGB_BACC1</name>
<comment type="function">
    <text evidence="1">Necessary for normal cell division and for the maintenance of normal septation.</text>
</comment>
<comment type="cofactor">
    <cofactor evidence="1">
        <name>Mg(2+)</name>
        <dbReference type="ChEBI" id="CHEBI:18420"/>
    </cofactor>
</comment>
<comment type="similarity">
    <text evidence="1">Belongs to the TRAFAC class TrmE-Era-EngA-EngB-Septin-like GTPase superfamily. EngB GTPase family.</text>
</comment>
<feature type="chain" id="PRO_0000266812" description="Probable GTP-binding protein EngB">
    <location>
        <begin position="1"/>
        <end position="198"/>
    </location>
</feature>
<feature type="domain" description="EngB-type G" evidence="1">
    <location>
        <begin position="22"/>
        <end position="195"/>
    </location>
</feature>
<feature type="binding site" evidence="1">
    <location>
        <begin position="30"/>
        <end position="37"/>
    </location>
    <ligand>
        <name>GTP</name>
        <dbReference type="ChEBI" id="CHEBI:37565"/>
    </ligand>
</feature>
<feature type="binding site" evidence="1">
    <location>
        <position position="37"/>
    </location>
    <ligand>
        <name>Mg(2+)</name>
        <dbReference type="ChEBI" id="CHEBI:18420"/>
    </ligand>
</feature>
<feature type="binding site" evidence="1">
    <location>
        <begin position="57"/>
        <end position="61"/>
    </location>
    <ligand>
        <name>GTP</name>
        <dbReference type="ChEBI" id="CHEBI:37565"/>
    </ligand>
</feature>
<feature type="binding site" evidence="1">
    <location>
        <position position="59"/>
    </location>
    <ligand>
        <name>Mg(2+)</name>
        <dbReference type="ChEBI" id="CHEBI:18420"/>
    </ligand>
</feature>
<feature type="binding site" evidence="1">
    <location>
        <begin position="75"/>
        <end position="78"/>
    </location>
    <ligand>
        <name>GTP</name>
        <dbReference type="ChEBI" id="CHEBI:37565"/>
    </ligand>
</feature>
<feature type="binding site" evidence="1">
    <location>
        <begin position="142"/>
        <end position="145"/>
    </location>
    <ligand>
        <name>GTP</name>
        <dbReference type="ChEBI" id="CHEBI:37565"/>
    </ligand>
</feature>
<feature type="binding site" evidence="1">
    <location>
        <begin position="174"/>
        <end position="176"/>
    </location>
    <ligand>
        <name>GTP</name>
        <dbReference type="ChEBI" id="CHEBI:37565"/>
    </ligand>
</feature>
<keyword id="KW-0131">Cell cycle</keyword>
<keyword id="KW-0132">Cell division</keyword>
<keyword id="KW-0342">GTP-binding</keyword>
<keyword id="KW-0460">Magnesium</keyword>
<keyword id="KW-0479">Metal-binding</keyword>
<keyword id="KW-0547">Nucleotide-binding</keyword>
<keyword id="KW-0717">Septation</keyword>
<proteinExistence type="inferred from homology"/>